<sequence>MSKIANVIGFEVMDSRGNPTVMAEVVLESGVVGTACAPSGASTGSREALELRDGDKSRYLGKGVLKAVANINETIKPLLVGKDVAAQRELDDIMLKADGTENKANLGANAILAVSLAAAKAAAQDKGIPLYAHIADINGTPGKYTMPVPMMNIINGGEHADNNVDIQEFMIQPVSAPNFTEALRMGAEVFHSLKKVLAGRGLNTAVGDEGGFAPNLPSNEAALEAIAEAVAAAGYKLGEEITLALDCASSEFYKDGVYDMSGEGKKFSPEEFADYLAELASKYPILSIEDGMDESDWDGWKVLTEKIGSTCQLVGDDLFVTNTKILKEGIDKSIANSILIKFNQIGSLSETLDAIKMAQEAGYTAVISHRSGETEDTTIADLAVATAAGQIKTGSLSRSDRVAKYNRLLRIEAELGEKAPYRGRAEFK</sequence>
<evidence type="ECO:0000255" key="1">
    <source>
        <dbReference type="HAMAP-Rule" id="MF_00318"/>
    </source>
</evidence>
<accession>Q21LC2</accession>
<gene>
    <name evidence="1" type="primary">eno</name>
    <name type="ordered locus">Sde_1245</name>
</gene>
<keyword id="KW-0963">Cytoplasm</keyword>
<keyword id="KW-0324">Glycolysis</keyword>
<keyword id="KW-0456">Lyase</keyword>
<keyword id="KW-0460">Magnesium</keyword>
<keyword id="KW-0479">Metal-binding</keyword>
<keyword id="KW-1185">Reference proteome</keyword>
<keyword id="KW-0964">Secreted</keyword>
<comment type="function">
    <text evidence="1">Catalyzes the reversible conversion of 2-phosphoglycerate (2-PG) into phosphoenolpyruvate (PEP). It is essential for the degradation of carbohydrates via glycolysis.</text>
</comment>
<comment type="catalytic activity">
    <reaction evidence="1">
        <text>(2R)-2-phosphoglycerate = phosphoenolpyruvate + H2O</text>
        <dbReference type="Rhea" id="RHEA:10164"/>
        <dbReference type="ChEBI" id="CHEBI:15377"/>
        <dbReference type="ChEBI" id="CHEBI:58289"/>
        <dbReference type="ChEBI" id="CHEBI:58702"/>
        <dbReference type="EC" id="4.2.1.11"/>
    </reaction>
</comment>
<comment type="cofactor">
    <cofactor evidence="1">
        <name>Mg(2+)</name>
        <dbReference type="ChEBI" id="CHEBI:18420"/>
    </cofactor>
    <text evidence="1">Binds a second Mg(2+) ion via substrate during catalysis.</text>
</comment>
<comment type="pathway">
    <text evidence="1">Carbohydrate degradation; glycolysis; pyruvate from D-glyceraldehyde 3-phosphate: step 4/5.</text>
</comment>
<comment type="subunit">
    <text evidence="1">Component of the RNA degradosome, a multiprotein complex involved in RNA processing and mRNA degradation.</text>
</comment>
<comment type="subcellular location">
    <subcellularLocation>
        <location evidence="1">Cytoplasm</location>
    </subcellularLocation>
    <subcellularLocation>
        <location evidence="1">Secreted</location>
    </subcellularLocation>
    <subcellularLocation>
        <location evidence="1">Cell surface</location>
    </subcellularLocation>
    <text evidence="1">Fractions of enolase are present in both the cytoplasm and on the cell surface.</text>
</comment>
<comment type="similarity">
    <text evidence="1">Belongs to the enolase family.</text>
</comment>
<organism>
    <name type="scientific">Saccharophagus degradans (strain 2-40 / ATCC 43961 / DSM 17024)</name>
    <dbReference type="NCBI Taxonomy" id="203122"/>
    <lineage>
        <taxon>Bacteria</taxon>
        <taxon>Pseudomonadati</taxon>
        <taxon>Pseudomonadota</taxon>
        <taxon>Gammaproteobacteria</taxon>
        <taxon>Cellvibrionales</taxon>
        <taxon>Cellvibrionaceae</taxon>
        <taxon>Saccharophagus</taxon>
    </lineage>
</organism>
<dbReference type="EC" id="4.2.1.11" evidence="1"/>
<dbReference type="EMBL" id="CP000282">
    <property type="protein sequence ID" value="ABD80507.1"/>
    <property type="molecule type" value="Genomic_DNA"/>
</dbReference>
<dbReference type="RefSeq" id="WP_011467727.1">
    <property type="nucleotide sequence ID" value="NC_007912.1"/>
</dbReference>
<dbReference type="SMR" id="Q21LC2"/>
<dbReference type="STRING" id="203122.Sde_1245"/>
<dbReference type="GeneID" id="98612922"/>
<dbReference type="KEGG" id="sde:Sde_1245"/>
<dbReference type="eggNOG" id="COG0148">
    <property type="taxonomic scope" value="Bacteria"/>
</dbReference>
<dbReference type="HOGENOM" id="CLU_031223_2_1_6"/>
<dbReference type="OrthoDB" id="9804716at2"/>
<dbReference type="UniPathway" id="UPA00109">
    <property type="reaction ID" value="UER00187"/>
</dbReference>
<dbReference type="Proteomes" id="UP000001947">
    <property type="component" value="Chromosome"/>
</dbReference>
<dbReference type="GO" id="GO:0009986">
    <property type="term" value="C:cell surface"/>
    <property type="evidence" value="ECO:0007669"/>
    <property type="project" value="UniProtKB-SubCell"/>
</dbReference>
<dbReference type="GO" id="GO:0005576">
    <property type="term" value="C:extracellular region"/>
    <property type="evidence" value="ECO:0007669"/>
    <property type="project" value="UniProtKB-SubCell"/>
</dbReference>
<dbReference type="GO" id="GO:0000015">
    <property type="term" value="C:phosphopyruvate hydratase complex"/>
    <property type="evidence" value="ECO:0007669"/>
    <property type="project" value="InterPro"/>
</dbReference>
<dbReference type="GO" id="GO:0000287">
    <property type="term" value="F:magnesium ion binding"/>
    <property type="evidence" value="ECO:0007669"/>
    <property type="project" value="UniProtKB-UniRule"/>
</dbReference>
<dbReference type="GO" id="GO:0004634">
    <property type="term" value="F:phosphopyruvate hydratase activity"/>
    <property type="evidence" value="ECO:0007669"/>
    <property type="project" value="UniProtKB-UniRule"/>
</dbReference>
<dbReference type="GO" id="GO:0006096">
    <property type="term" value="P:glycolytic process"/>
    <property type="evidence" value="ECO:0007669"/>
    <property type="project" value="UniProtKB-UniRule"/>
</dbReference>
<dbReference type="CDD" id="cd03313">
    <property type="entry name" value="enolase"/>
    <property type="match status" value="1"/>
</dbReference>
<dbReference type="FunFam" id="3.20.20.120:FF:000001">
    <property type="entry name" value="Enolase"/>
    <property type="match status" value="1"/>
</dbReference>
<dbReference type="FunFam" id="3.30.390.10:FF:000001">
    <property type="entry name" value="Enolase"/>
    <property type="match status" value="1"/>
</dbReference>
<dbReference type="Gene3D" id="3.20.20.120">
    <property type="entry name" value="Enolase-like C-terminal domain"/>
    <property type="match status" value="1"/>
</dbReference>
<dbReference type="Gene3D" id="3.30.390.10">
    <property type="entry name" value="Enolase-like, N-terminal domain"/>
    <property type="match status" value="1"/>
</dbReference>
<dbReference type="HAMAP" id="MF_00318">
    <property type="entry name" value="Enolase"/>
    <property type="match status" value="1"/>
</dbReference>
<dbReference type="InterPro" id="IPR000941">
    <property type="entry name" value="Enolase"/>
</dbReference>
<dbReference type="InterPro" id="IPR036849">
    <property type="entry name" value="Enolase-like_C_sf"/>
</dbReference>
<dbReference type="InterPro" id="IPR029017">
    <property type="entry name" value="Enolase-like_N"/>
</dbReference>
<dbReference type="InterPro" id="IPR020810">
    <property type="entry name" value="Enolase_C"/>
</dbReference>
<dbReference type="InterPro" id="IPR020809">
    <property type="entry name" value="Enolase_CS"/>
</dbReference>
<dbReference type="InterPro" id="IPR020811">
    <property type="entry name" value="Enolase_N"/>
</dbReference>
<dbReference type="NCBIfam" id="TIGR01060">
    <property type="entry name" value="eno"/>
    <property type="match status" value="1"/>
</dbReference>
<dbReference type="PANTHER" id="PTHR11902">
    <property type="entry name" value="ENOLASE"/>
    <property type="match status" value="1"/>
</dbReference>
<dbReference type="PANTHER" id="PTHR11902:SF1">
    <property type="entry name" value="ENOLASE"/>
    <property type="match status" value="1"/>
</dbReference>
<dbReference type="Pfam" id="PF00113">
    <property type="entry name" value="Enolase_C"/>
    <property type="match status" value="1"/>
</dbReference>
<dbReference type="Pfam" id="PF03952">
    <property type="entry name" value="Enolase_N"/>
    <property type="match status" value="1"/>
</dbReference>
<dbReference type="PIRSF" id="PIRSF001400">
    <property type="entry name" value="Enolase"/>
    <property type="match status" value="1"/>
</dbReference>
<dbReference type="PRINTS" id="PR00148">
    <property type="entry name" value="ENOLASE"/>
</dbReference>
<dbReference type="SFLD" id="SFLDS00001">
    <property type="entry name" value="Enolase"/>
    <property type="match status" value="1"/>
</dbReference>
<dbReference type="SFLD" id="SFLDF00002">
    <property type="entry name" value="enolase"/>
    <property type="match status" value="1"/>
</dbReference>
<dbReference type="SMART" id="SM01192">
    <property type="entry name" value="Enolase_C"/>
    <property type="match status" value="1"/>
</dbReference>
<dbReference type="SMART" id="SM01193">
    <property type="entry name" value="Enolase_N"/>
    <property type="match status" value="1"/>
</dbReference>
<dbReference type="SUPFAM" id="SSF51604">
    <property type="entry name" value="Enolase C-terminal domain-like"/>
    <property type="match status" value="1"/>
</dbReference>
<dbReference type="SUPFAM" id="SSF54826">
    <property type="entry name" value="Enolase N-terminal domain-like"/>
    <property type="match status" value="1"/>
</dbReference>
<dbReference type="PROSITE" id="PS00164">
    <property type="entry name" value="ENOLASE"/>
    <property type="match status" value="1"/>
</dbReference>
<proteinExistence type="inferred from homology"/>
<name>ENO_SACD2</name>
<feature type="chain" id="PRO_0000267097" description="Enolase">
    <location>
        <begin position="1"/>
        <end position="428"/>
    </location>
</feature>
<feature type="active site" description="Proton donor" evidence="1">
    <location>
        <position position="209"/>
    </location>
</feature>
<feature type="active site" description="Proton acceptor" evidence="1">
    <location>
        <position position="341"/>
    </location>
</feature>
<feature type="binding site" evidence="1">
    <location>
        <position position="167"/>
    </location>
    <ligand>
        <name>(2R)-2-phosphoglycerate</name>
        <dbReference type="ChEBI" id="CHEBI:58289"/>
    </ligand>
</feature>
<feature type="binding site" evidence="1">
    <location>
        <position position="246"/>
    </location>
    <ligand>
        <name>Mg(2+)</name>
        <dbReference type="ChEBI" id="CHEBI:18420"/>
    </ligand>
</feature>
<feature type="binding site" evidence="1">
    <location>
        <position position="289"/>
    </location>
    <ligand>
        <name>Mg(2+)</name>
        <dbReference type="ChEBI" id="CHEBI:18420"/>
    </ligand>
</feature>
<feature type="binding site" evidence="1">
    <location>
        <position position="316"/>
    </location>
    <ligand>
        <name>Mg(2+)</name>
        <dbReference type="ChEBI" id="CHEBI:18420"/>
    </ligand>
</feature>
<feature type="binding site" evidence="1">
    <location>
        <position position="341"/>
    </location>
    <ligand>
        <name>(2R)-2-phosphoglycerate</name>
        <dbReference type="ChEBI" id="CHEBI:58289"/>
    </ligand>
</feature>
<feature type="binding site" evidence="1">
    <location>
        <position position="370"/>
    </location>
    <ligand>
        <name>(2R)-2-phosphoglycerate</name>
        <dbReference type="ChEBI" id="CHEBI:58289"/>
    </ligand>
</feature>
<feature type="binding site" evidence="1">
    <location>
        <position position="371"/>
    </location>
    <ligand>
        <name>(2R)-2-phosphoglycerate</name>
        <dbReference type="ChEBI" id="CHEBI:58289"/>
    </ligand>
</feature>
<feature type="binding site" evidence="1">
    <location>
        <position position="392"/>
    </location>
    <ligand>
        <name>(2R)-2-phosphoglycerate</name>
        <dbReference type="ChEBI" id="CHEBI:58289"/>
    </ligand>
</feature>
<protein>
    <recommendedName>
        <fullName evidence="1">Enolase</fullName>
        <ecNumber evidence="1">4.2.1.11</ecNumber>
    </recommendedName>
    <alternativeName>
        <fullName evidence="1">2-phospho-D-glycerate hydro-lyase</fullName>
    </alternativeName>
    <alternativeName>
        <fullName evidence="1">2-phosphoglycerate dehydratase</fullName>
    </alternativeName>
</protein>
<reference key="1">
    <citation type="journal article" date="2008" name="PLoS Genet.">
        <title>Complete genome sequence of the complex carbohydrate-degrading marine bacterium, Saccharophagus degradans strain 2-40 T.</title>
        <authorList>
            <person name="Weiner R.M."/>
            <person name="Taylor L.E. II"/>
            <person name="Henrissat B."/>
            <person name="Hauser L."/>
            <person name="Land M."/>
            <person name="Coutinho P.M."/>
            <person name="Rancurel C."/>
            <person name="Saunders E.H."/>
            <person name="Longmire A.G."/>
            <person name="Zhang H."/>
            <person name="Bayer E.A."/>
            <person name="Gilbert H.J."/>
            <person name="Larimer F."/>
            <person name="Zhulin I.B."/>
            <person name="Ekborg N.A."/>
            <person name="Lamed R."/>
            <person name="Richardson P.M."/>
            <person name="Borovok I."/>
            <person name="Hutcheson S."/>
        </authorList>
    </citation>
    <scope>NUCLEOTIDE SEQUENCE [LARGE SCALE GENOMIC DNA]</scope>
    <source>
        <strain>2-40 / ATCC 43961 / DSM 17024</strain>
    </source>
</reference>